<comment type="function">
    <text evidence="1 2">Part of ribonuclease P, a protein complex that generates mature tRNA molecules by cleaving their 5'-ends.</text>
</comment>
<comment type="catalytic activity">
    <reaction evidence="1">
        <text>Endonucleolytic cleavage of RNA, removing 5'-extranucleotides from tRNA precursor.</text>
        <dbReference type="EC" id="3.1.26.5"/>
    </reaction>
</comment>
<comment type="biophysicochemical properties">
    <kinetics>
        <KM evidence="2">2.6 uM for pre-tRNA-Tyr in the absence of L7Ae</KM>
        <KM evidence="2">0.044 uM for pre-tRNA-Tyr in the presence of L7Ae</KM>
        <text>kcat 10 min(-1) in absence of L7Ae, 63 min(-1) in presence of L7Ae. Kinetic parameters determined at 37 degrees Celsius.</text>
    </kinetics>
    <temperatureDependence>
        <text evidence="2">Optimum temperature is 36-38 degrees Celsius in the absence of L7Ae, 48-50 degrees Celsius in presence of L7Ae.</text>
    </temperatureDependence>
</comment>
<comment type="subunit">
    <text evidence="2">Consists of a catalytic RNA component and at least 5 protein subunits.</text>
</comment>
<comment type="subcellular location">
    <subcellularLocation>
        <location evidence="1 2">Cytoplasm</location>
    </subcellularLocation>
</comment>
<comment type="similarity">
    <text evidence="1">Belongs to the eukaryotic/archaeal RNase P protein component 2 family.</text>
</comment>
<gene>
    <name evidence="1" type="primary">rnp2</name>
    <name type="ordered locus">MMP0878</name>
</gene>
<evidence type="ECO:0000255" key="1">
    <source>
        <dbReference type="HAMAP-Rule" id="MF_00755"/>
    </source>
</evidence>
<evidence type="ECO:0000269" key="2">
    <source>
    </source>
</evidence>
<dbReference type="EC" id="3.1.26.5" evidence="1"/>
<dbReference type="EMBL" id="BX950229">
    <property type="protein sequence ID" value="CAF30434.1"/>
    <property type="molecule type" value="Genomic_DNA"/>
</dbReference>
<dbReference type="RefSeq" id="WP_011170822.1">
    <property type="nucleotide sequence ID" value="NC_005791.1"/>
</dbReference>
<dbReference type="SMR" id="P60780"/>
<dbReference type="DIP" id="DIP-59368N"/>
<dbReference type="IntAct" id="P60780">
    <property type="interactions" value="1"/>
</dbReference>
<dbReference type="STRING" id="267377.MMP0878"/>
<dbReference type="EnsemblBacteria" id="CAF30434">
    <property type="protein sequence ID" value="CAF30434"/>
    <property type="gene ID" value="MMP0878"/>
</dbReference>
<dbReference type="GeneID" id="2762695"/>
<dbReference type="KEGG" id="mmp:MMP0878"/>
<dbReference type="PATRIC" id="fig|267377.15.peg.904"/>
<dbReference type="eggNOG" id="arCOG01365">
    <property type="taxonomic scope" value="Archaea"/>
</dbReference>
<dbReference type="HOGENOM" id="CLU_137733_1_0_2"/>
<dbReference type="OrthoDB" id="19261at2157"/>
<dbReference type="BRENDA" id="3.1.26.5">
    <property type="organism ID" value="3262"/>
</dbReference>
<dbReference type="Proteomes" id="UP000000590">
    <property type="component" value="Chromosome"/>
</dbReference>
<dbReference type="GO" id="GO:0005737">
    <property type="term" value="C:cytoplasm"/>
    <property type="evidence" value="ECO:0000314"/>
    <property type="project" value="UniProtKB"/>
</dbReference>
<dbReference type="GO" id="GO:0030677">
    <property type="term" value="C:ribonuclease P complex"/>
    <property type="evidence" value="ECO:0000314"/>
    <property type="project" value="UniProtKB"/>
</dbReference>
<dbReference type="GO" id="GO:0004526">
    <property type="term" value="F:ribonuclease P activity"/>
    <property type="evidence" value="ECO:0000314"/>
    <property type="project" value="UniProtKB"/>
</dbReference>
<dbReference type="GO" id="GO:0001682">
    <property type="term" value="P:tRNA 5'-leader removal"/>
    <property type="evidence" value="ECO:0000314"/>
    <property type="project" value="UniProtKB"/>
</dbReference>
<dbReference type="Gene3D" id="3.30.70.3250">
    <property type="entry name" value="Ribonuclease P, Pop5 subunit"/>
    <property type="match status" value="1"/>
</dbReference>
<dbReference type="HAMAP" id="MF_00755">
    <property type="entry name" value="RNase_P_2"/>
    <property type="match status" value="1"/>
</dbReference>
<dbReference type="InterPro" id="IPR002759">
    <property type="entry name" value="Pop5/Rpp14/Rnp2-like"/>
</dbReference>
<dbReference type="InterPro" id="IPR038085">
    <property type="entry name" value="Rnp2-like_sf"/>
</dbReference>
<dbReference type="InterPro" id="IPR016434">
    <property type="entry name" value="Rnp2_archaea"/>
</dbReference>
<dbReference type="PANTHER" id="PTHR15441">
    <property type="entry name" value="RIBONUCLEASE P PROTEIN SUBUNIT P14"/>
    <property type="match status" value="1"/>
</dbReference>
<dbReference type="PANTHER" id="PTHR15441:SF2">
    <property type="entry name" value="RIBONUCLEASE P_MRP PROTEIN SUBUNIT POP5"/>
    <property type="match status" value="1"/>
</dbReference>
<dbReference type="Pfam" id="PF01900">
    <property type="entry name" value="RNase_P_Rpp14"/>
    <property type="match status" value="1"/>
</dbReference>
<dbReference type="PIRSF" id="PIRSF004952">
    <property type="entry name" value="RNase_P_2"/>
    <property type="match status" value="1"/>
</dbReference>
<dbReference type="SUPFAM" id="SSF160350">
    <property type="entry name" value="Rnp2-like"/>
    <property type="match status" value="1"/>
</dbReference>
<name>RNP2_METMP</name>
<accession>P60780</accession>
<feature type="chain" id="PRO_0000140023" description="Ribonuclease P protein component 2">
    <location>
        <begin position="1"/>
        <end position="130"/>
    </location>
</feature>
<organism>
    <name type="scientific">Methanococcus maripaludis (strain DSM 14266 / JCM 13030 / NBRC 101832 / S2 / LL)</name>
    <dbReference type="NCBI Taxonomy" id="267377"/>
    <lineage>
        <taxon>Archaea</taxon>
        <taxon>Methanobacteriati</taxon>
        <taxon>Methanobacteriota</taxon>
        <taxon>Methanomada group</taxon>
        <taxon>Methanococci</taxon>
        <taxon>Methanococcales</taxon>
        <taxon>Methanococcaceae</taxon>
        <taxon>Methanococcus</taxon>
    </lineage>
</organism>
<proteinExistence type="evidence at protein level"/>
<keyword id="KW-0963">Cytoplasm</keyword>
<keyword id="KW-0255">Endonuclease</keyword>
<keyword id="KW-0378">Hydrolase</keyword>
<keyword id="KW-0540">Nuclease</keyword>
<keyword id="KW-1185">Reference proteome</keyword>
<keyword id="KW-0819">tRNA processing</keyword>
<sequence length="130" mass="15149">MLKTLPPTLREKKRYVALEIIYEMELSQKDVISVVRNALLNYSGVLGCSRTNPWLIDYGHPYGILRISREEVDTLRSSLSLMGEHKKKPINIRIIGISNSVKHIREKFLHVPHEPYYKVIQKLKRKGPKK</sequence>
<reference key="1">
    <citation type="journal article" date="2004" name="J. Bacteriol.">
        <title>Complete genome sequence of the genetically tractable hydrogenotrophic methanogen Methanococcus maripaludis.</title>
        <authorList>
            <person name="Hendrickson E.L."/>
            <person name="Kaul R."/>
            <person name="Zhou Y."/>
            <person name="Bovee D."/>
            <person name="Chapman P."/>
            <person name="Chung J."/>
            <person name="Conway de Macario E."/>
            <person name="Dodsworth J.A."/>
            <person name="Gillett W."/>
            <person name="Graham D.E."/>
            <person name="Hackett M."/>
            <person name="Haydock A.K."/>
            <person name="Kang A."/>
            <person name="Land M.L."/>
            <person name="Levy R."/>
            <person name="Lie T.J."/>
            <person name="Major T.A."/>
            <person name="Moore B.C."/>
            <person name="Porat I."/>
            <person name="Palmeiri A."/>
            <person name="Rouse G."/>
            <person name="Saenphimmachak C."/>
            <person name="Soell D."/>
            <person name="Van Dien S."/>
            <person name="Wang T."/>
            <person name="Whitman W.B."/>
            <person name="Xia Q."/>
            <person name="Zhang Y."/>
            <person name="Larimer F.W."/>
            <person name="Olson M.V."/>
            <person name="Leigh J.A."/>
        </authorList>
    </citation>
    <scope>NUCLEOTIDE SEQUENCE [LARGE SCALE GENOMIC DNA]</scope>
    <source>
        <strain>DSM 14266 / JCM 13030 / NBRC 101832 / S2 / LL</strain>
    </source>
</reference>
<reference key="2">
    <citation type="journal article" date="2010" name="Proc. Natl. Acad. Sci. U.S.A.">
        <title>Ribosomal protein L7Ae is a subunit of archaeal RNase P.</title>
        <authorList>
            <person name="Cho I.M."/>
            <person name="Lai L.B."/>
            <person name="Susanti D."/>
            <person name="Mukhopadhyay B."/>
            <person name="Gopalan V."/>
        </authorList>
    </citation>
    <scope>FUNCTION</scope>
    <scope>BIOPHYSICOCHEMICAL PROPERTIES</scope>
    <scope>SUBUNIT</scope>
    <scope>SUBCELLULAR LOCATION</scope>
    <source>
        <strain>DSM 14266 / JCM 13030 / NBRC 101832 / S2 / LL</strain>
    </source>
</reference>
<protein>
    <recommendedName>
        <fullName evidence="1">Ribonuclease P protein component 2</fullName>
        <shortName evidence="1">RNase P component 2</shortName>
        <ecNumber evidence="1">3.1.26.5</ecNumber>
    </recommendedName>
    <alternativeName>
        <fullName evidence="1">Pop5</fullName>
    </alternativeName>
</protein>